<reference key="1">
    <citation type="submission" date="2003-03" db="EMBL/GenBank/DDBJ databases">
        <title>African swine fever virus genomes.</title>
        <authorList>
            <person name="Kutish G.F."/>
            <person name="Rock D.L."/>
        </authorList>
    </citation>
    <scope>NUCLEOTIDE SEQUENCE [LARGE SCALE GENOMIC DNA]</scope>
</reference>
<dbReference type="EC" id="2.7.4.9"/>
<dbReference type="EMBL" id="AY261366">
    <property type="status" value="NOT_ANNOTATED_CDS"/>
    <property type="molecule type" value="Genomic_DNA"/>
</dbReference>
<dbReference type="SMR" id="P0C8G2"/>
<dbReference type="UniPathway" id="UPA00575"/>
<dbReference type="Proteomes" id="UP000000858">
    <property type="component" value="Segment"/>
</dbReference>
<dbReference type="GO" id="GO:0005524">
    <property type="term" value="F:ATP binding"/>
    <property type="evidence" value="ECO:0007669"/>
    <property type="project" value="UniProtKB-KW"/>
</dbReference>
<dbReference type="GO" id="GO:0004798">
    <property type="term" value="F:dTMP kinase activity"/>
    <property type="evidence" value="ECO:0007669"/>
    <property type="project" value="UniProtKB-EC"/>
</dbReference>
<dbReference type="GO" id="GO:0006233">
    <property type="term" value="P:dTDP biosynthetic process"/>
    <property type="evidence" value="ECO:0007669"/>
    <property type="project" value="TreeGrafter"/>
</dbReference>
<dbReference type="GO" id="GO:0006235">
    <property type="term" value="P:dTTP biosynthetic process"/>
    <property type="evidence" value="ECO:0007669"/>
    <property type="project" value="UniProtKB-UniPathway"/>
</dbReference>
<dbReference type="GO" id="GO:0006227">
    <property type="term" value="P:dUDP biosynthetic process"/>
    <property type="evidence" value="ECO:0007669"/>
    <property type="project" value="TreeGrafter"/>
</dbReference>
<dbReference type="Gene3D" id="3.40.50.300">
    <property type="entry name" value="P-loop containing nucleotide triphosphate hydrolases"/>
    <property type="match status" value="1"/>
</dbReference>
<dbReference type="InterPro" id="IPR027417">
    <property type="entry name" value="P-loop_NTPase"/>
</dbReference>
<dbReference type="InterPro" id="IPR039430">
    <property type="entry name" value="Thymidylate_kin-like_dom"/>
</dbReference>
<dbReference type="PANTHER" id="PTHR10344">
    <property type="entry name" value="THYMIDYLATE KINASE"/>
    <property type="match status" value="1"/>
</dbReference>
<dbReference type="PANTHER" id="PTHR10344:SF4">
    <property type="entry name" value="UMP-CMP KINASE 2, MITOCHONDRIAL"/>
    <property type="match status" value="1"/>
</dbReference>
<dbReference type="Pfam" id="PF02223">
    <property type="entry name" value="Thymidylate_kin"/>
    <property type="match status" value="1"/>
</dbReference>
<dbReference type="SUPFAM" id="SSF52540">
    <property type="entry name" value="P-loop containing nucleoside triphosphate hydrolases"/>
    <property type="match status" value="1"/>
</dbReference>
<dbReference type="PROSITE" id="PS01331">
    <property type="entry name" value="THYMIDYLATE_KINASE"/>
    <property type="match status" value="1"/>
</dbReference>
<organism>
    <name type="scientific">African swine fever virus (isolate Warthog/Namibia/Wart80/1980)</name>
    <name type="common">ASFV</name>
    <dbReference type="NCBI Taxonomy" id="561444"/>
    <lineage>
        <taxon>Viruses</taxon>
        <taxon>Varidnaviria</taxon>
        <taxon>Bamfordvirae</taxon>
        <taxon>Nucleocytoviricota</taxon>
        <taxon>Pokkesviricetes</taxon>
        <taxon>Asfuvirales</taxon>
        <taxon>Asfarviridae</taxon>
        <taxon>Asfivirus</taxon>
        <taxon>African swine fever virus</taxon>
    </lineage>
</organism>
<proteinExistence type="inferred from homology"/>
<name>KTHY_ASFWA</name>
<protein>
    <recommendedName>
        <fullName>Thymidylate kinase</fullName>
        <ecNumber>2.7.4.9</ecNumber>
    </recommendedName>
    <alternativeName>
        <fullName>dTMP kinase</fullName>
    </alternativeName>
</protein>
<feature type="chain" id="PRO_0000355067" description="Thymidylate kinase">
    <location>
        <begin position="1"/>
        <end position="239"/>
    </location>
</feature>
<feature type="binding site" evidence="1">
    <location>
        <begin position="10"/>
        <end position="17"/>
    </location>
    <ligand>
        <name>ATP</name>
        <dbReference type="ChEBI" id="CHEBI:30616"/>
    </ligand>
</feature>
<comment type="function">
    <text>Catalyzes the conversion of dTMP to dTDP.</text>
</comment>
<comment type="catalytic activity">
    <reaction>
        <text>dTMP + ATP = dTDP + ADP</text>
        <dbReference type="Rhea" id="RHEA:13517"/>
        <dbReference type="ChEBI" id="CHEBI:30616"/>
        <dbReference type="ChEBI" id="CHEBI:58369"/>
        <dbReference type="ChEBI" id="CHEBI:63528"/>
        <dbReference type="ChEBI" id="CHEBI:456216"/>
        <dbReference type="EC" id="2.7.4.9"/>
    </reaction>
</comment>
<comment type="pathway">
    <text>Pyrimidine metabolism; dTTP biosynthesis.</text>
</comment>
<comment type="similarity">
    <text evidence="2">Belongs to the thymidylate kinase family.</text>
</comment>
<organismHost>
    <name type="scientific">Ornithodoros</name>
    <name type="common">relapsing fever ticks</name>
    <dbReference type="NCBI Taxonomy" id="6937"/>
</organismHost>
<organismHost>
    <name type="scientific">Phacochoerus aethiopicus</name>
    <name type="common">Warthog</name>
    <dbReference type="NCBI Taxonomy" id="85517"/>
</organismHost>
<organismHost>
    <name type="scientific">Phacochoerus africanus</name>
    <name type="common">Warthog</name>
    <dbReference type="NCBI Taxonomy" id="41426"/>
</organismHost>
<organismHost>
    <name type="scientific">Potamochoerus larvatus</name>
    <name type="common">Bushpig</name>
    <dbReference type="NCBI Taxonomy" id="273792"/>
</organismHost>
<organismHost>
    <name type="scientific">Sus scrofa</name>
    <name type="common">Pig</name>
    <dbReference type="NCBI Taxonomy" id="9823"/>
</organismHost>
<accession>P0C8G2</accession>
<keyword id="KW-0067">ATP-binding</keyword>
<keyword id="KW-0418">Kinase</keyword>
<keyword id="KW-0545">Nucleotide biosynthesis</keyword>
<keyword id="KW-0547">Nucleotide-binding</keyword>
<keyword id="KW-0808">Transferase</keyword>
<gene>
    <name type="primary">TMK</name>
    <name type="ordered locus">War-046</name>
</gene>
<sequence>MRGILIAIEGINGVGKSTQAMRLKKALECMDYNAVCIRFPNPDTTTGDLILQVLNKMIEMSSEQLHKLFTKHCSEFVAEIAALLKLNFIVIVDRYIWSGLAYAQADGITIETKNTFKPDYTFFLSSKKPLNEKPLTLQRLFETKEKQETIFTNFTIIMNDVPKNRLCTIPATLNKEIIHTMILTKTIKVFDNNSCLNYIKMYDDKYLNVQELNLFDFEWQKCIEDNNDKEEYDDDDFIV</sequence>
<evidence type="ECO:0000255" key="1"/>
<evidence type="ECO:0000305" key="2"/>